<organism>
    <name type="scientific">Escherichia coli O1:K1 / APEC</name>
    <dbReference type="NCBI Taxonomy" id="405955"/>
    <lineage>
        <taxon>Bacteria</taxon>
        <taxon>Pseudomonadati</taxon>
        <taxon>Pseudomonadota</taxon>
        <taxon>Gammaproteobacteria</taxon>
        <taxon>Enterobacterales</taxon>
        <taxon>Enterobacteriaceae</taxon>
        <taxon>Escherichia</taxon>
    </lineage>
</organism>
<dbReference type="EMBL" id="CP000468">
    <property type="protein sequence ID" value="ABJ01090.1"/>
    <property type="molecule type" value="Genomic_DNA"/>
</dbReference>
<dbReference type="RefSeq" id="WP_000124850.1">
    <property type="nucleotide sequence ID" value="NZ_CADILS010000002.1"/>
</dbReference>
<dbReference type="SMR" id="A1ABQ0"/>
<dbReference type="GeneID" id="98388757"/>
<dbReference type="KEGG" id="ecv:APECO1_789"/>
<dbReference type="HOGENOM" id="CLU_123265_0_1_6"/>
<dbReference type="Proteomes" id="UP000008216">
    <property type="component" value="Chromosome"/>
</dbReference>
<dbReference type="GO" id="GO:1990904">
    <property type="term" value="C:ribonucleoprotein complex"/>
    <property type="evidence" value="ECO:0007669"/>
    <property type="project" value="UniProtKB-KW"/>
</dbReference>
<dbReference type="GO" id="GO:0005840">
    <property type="term" value="C:ribosome"/>
    <property type="evidence" value="ECO:0007669"/>
    <property type="project" value="UniProtKB-KW"/>
</dbReference>
<dbReference type="GO" id="GO:0019843">
    <property type="term" value="F:rRNA binding"/>
    <property type="evidence" value="ECO:0007669"/>
    <property type="project" value="UniProtKB-UniRule"/>
</dbReference>
<dbReference type="GO" id="GO:0003735">
    <property type="term" value="F:structural constituent of ribosome"/>
    <property type="evidence" value="ECO:0007669"/>
    <property type="project" value="InterPro"/>
</dbReference>
<dbReference type="GO" id="GO:0000027">
    <property type="term" value="P:ribosomal large subunit assembly"/>
    <property type="evidence" value="ECO:0007669"/>
    <property type="project" value="UniProtKB-UniRule"/>
</dbReference>
<dbReference type="GO" id="GO:0006412">
    <property type="term" value="P:translation"/>
    <property type="evidence" value="ECO:0007669"/>
    <property type="project" value="InterPro"/>
</dbReference>
<dbReference type="CDD" id="cd07026">
    <property type="entry name" value="Ribosomal_L20"/>
    <property type="match status" value="1"/>
</dbReference>
<dbReference type="FunFam" id="1.10.1900.20:FF:000001">
    <property type="entry name" value="50S ribosomal protein L20"/>
    <property type="match status" value="1"/>
</dbReference>
<dbReference type="Gene3D" id="6.10.160.10">
    <property type="match status" value="1"/>
</dbReference>
<dbReference type="Gene3D" id="1.10.1900.20">
    <property type="entry name" value="Ribosomal protein L20"/>
    <property type="match status" value="1"/>
</dbReference>
<dbReference type="HAMAP" id="MF_00382">
    <property type="entry name" value="Ribosomal_bL20"/>
    <property type="match status" value="1"/>
</dbReference>
<dbReference type="InterPro" id="IPR005813">
    <property type="entry name" value="Ribosomal_bL20"/>
</dbReference>
<dbReference type="InterPro" id="IPR049946">
    <property type="entry name" value="RIBOSOMAL_L20_CS"/>
</dbReference>
<dbReference type="InterPro" id="IPR035566">
    <property type="entry name" value="Ribosomal_protein_bL20_C"/>
</dbReference>
<dbReference type="NCBIfam" id="TIGR01032">
    <property type="entry name" value="rplT_bact"/>
    <property type="match status" value="1"/>
</dbReference>
<dbReference type="PANTHER" id="PTHR10986">
    <property type="entry name" value="39S RIBOSOMAL PROTEIN L20"/>
    <property type="match status" value="1"/>
</dbReference>
<dbReference type="Pfam" id="PF00453">
    <property type="entry name" value="Ribosomal_L20"/>
    <property type="match status" value="1"/>
</dbReference>
<dbReference type="PRINTS" id="PR00062">
    <property type="entry name" value="RIBOSOMALL20"/>
</dbReference>
<dbReference type="SUPFAM" id="SSF74731">
    <property type="entry name" value="Ribosomal protein L20"/>
    <property type="match status" value="1"/>
</dbReference>
<dbReference type="PROSITE" id="PS00937">
    <property type="entry name" value="RIBOSOMAL_L20"/>
    <property type="match status" value="1"/>
</dbReference>
<keyword id="KW-1185">Reference proteome</keyword>
<keyword id="KW-0687">Ribonucleoprotein</keyword>
<keyword id="KW-0689">Ribosomal protein</keyword>
<keyword id="KW-0694">RNA-binding</keyword>
<keyword id="KW-0699">rRNA-binding</keyword>
<sequence>MARVKRGVIARARHKKILKQAKGYYGARSRVYRVAFQAVIKAGQYAYRDRRQRKRQFRQLWIARINAAARQNGISYSKFINGLKKASVEIDRKILADIAVFDKVAFTALVEKAKAALA</sequence>
<comment type="function">
    <text evidence="1">Binds directly to 23S ribosomal RNA and is necessary for the in vitro assembly process of the 50S ribosomal subunit. It is not involved in the protein synthesizing functions of that subunit.</text>
</comment>
<comment type="similarity">
    <text evidence="1">Belongs to the bacterial ribosomal protein bL20 family.</text>
</comment>
<feature type="chain" id="PRO_1000048971" description="Large ribosomal subunit protein bL20">
    <location>
        <begin position="1"/>
        <end position="118"/>
    </location>
</feature>
<proteinExistence type="inferred from homology"/>
<accession>A1ABQ0</accession>
<name>RL20_ECOK1</name>
<gene>
    <name evidence="1" type="primary">rplT</name>
    <name type="ordered locus">Ecok1_15960</name>
    <name type="ORF">APECO1_789</name>
</gene>
<protein>
    <recommendedName>
        <fullName evidence="1">Large ribosomal subunit protein bL20</fullName>
    </recommendedName>
    <alternativeName>
        <fullName evidence="2">50S ribosomal protein L20</fullName>
    </alternativeName>
</protein>
<evidence type="ECO:0000255" key="1">
    <source>
        <dbReference type="HAMAP-Rule" id="MF_00382"/>
    </source>
</evidence>
<evidence type="ECO:0000305" key="2"/>
<reference key="1">
    <citation type="journal article" date="2007" name="J. Bacteriol.">
        <title>The genome sequence of avian pathogenic Escherichia coli strain O1:K1:H7 shares strong similarities with human extraintestinal pathogenic E. coli genomes.</title>
        <authorList>
            <person name="Johnson T.J."/>
            <person name="Kariyawasam S."/>
            <person name="Wannemuehler Y."/>
            <person name="Mangiamele P."/>
            <person name="Johnson S.J."/>
            <person name="Doetkott C."/>
            <person name="Skyberg J.A."/>
            <person name="Lynne A.M."/>
            <person name="Johnson J.R."/>
            <person name="Nolan L.K."/>
        </authorList>
    </citation>
    <scope>NUCLEOTIDE SEQUENCE [LARGE SCALE GENOMIC DNA]</scope>
</reference>